<feature type="chain" id="PRO_0000322927" description="Recombination protein RecR">
    <location>
        <begin position="1"/>
        <end position="199"/>
    </location>
</feature>
<feature type="domain" description="Toprim" evidence="1">
    <location>
        <begin position="81"/>
        <end position="176"/>
    </location>
</feature>
<feature type="zinc finger region" description="C4-type" evidence="1">
    <location>
        <begin position="58"/>
        <end position="73"/>
    </location>
</feature>
<comment type="function">
    <text evidence="1">May play a role in DNA repair. It seems to be involved in an RecBC-independent recombinational process of DNA repair. It may act with RecF and RecO.</text>
</comment>
<comment type="similarity">
    <text evidence="1">Belongs to the RecR family.</text>
</comment>
<organism>
    <name type="scientific">Parvibaculum lavamentivorans (strain DS-1 / DSM 13023 / NCIMB 13966)</name>
    <dbReference type="NCBI Taxonomy" id="402881"/>
    <lineage>
        <taxon>Bacteria</taxon>
        <taxon>Pseudomonadati</taxon>
        <taxon>Pseudomonadota</taxon>
        <taxon>Alphaproteobacteria</taxon>
        <taxon>Hyphomicrobiales</taxon>
        <taxon>Parvibaculaceae</taxon>
        <taxon>Parvibaculum</taxon>
    </lineage>
</organism>
<dbReference type="EMBL" id="CP000774">
    <property type="protein sequence ID" value="ABS61881.1"/>
    <property type="molecule type" value="Genomic_DNA"/>
</dbReference>
<dbReference type="RefSeq" id="WP_011995172.1">
    <property type="nucleotide sequence ID" value="NC_009719.1"/>
</dbReference>
<dbReference type="SMR" id="A7HPP8"/>
<dbReference type="STRING" id="402881.Plav_0258"/>
<dbReference type="KEGG" id="pla:Plav_0258"/>
<dbReference type="eggNOG" id="COG0353">
    <property type="taxonomic scope" value="Bacteria"/>
</dbReference>
<dbReference type="HOGENOM" id="CLU_060739_1_1_5"/>
<dbReference type="OrthoDB" id="9802672at2"/>
<dbReference type="Proteomes" id="UP000006377">
    <property type="component" value="Chromosome"/>
</dbReference>
<dbReference type="GO" id="GO:0003677">
    <property type="term" value="F:DNA binding"/>
    <property type="evidence" value="ECO:0007669"/>
    <property type="project" value="UniProtKB-UniRule"/>
</dbReference>
<dbReference type="GO" id="GO:0008270">
    <property type="term" value="F:zinc ion binding"/>
    <property type="evidence" value="ECO:0007669"/>
    <property type="project" value="UniProtKB-KW"/>
</dbReference>
<dbReference type="GO" id="GO:0006310">
    <property type="term" value="P:DNA recombination"/>
    <property type="evidence" value="ECO:0007669"/>
    <property type="project" value="UniProtKB-UniRule"/>
</dbReference>
<dbReference type="GO" id="GO:0006281">
    <property type="term" value="P:DNA repair"/>
    <property type="evidence" value="ECO:0007669"/>
    <property type="project" value="UniProtKB-UniRule"/>
</dbReference>
<dbReference type="CDD" id="cd01025">
    <property type="entry name" value="TOPRIM_recR"/>
    <property type="match status" value="1"/>
</dbReference>
<dbReference type="Gene3D" id="3.30.60.80">
    <property type="match status" value="1"/>
</dbReference>
<dbReference type="Gene3D" id="3.40.1360.10">
    <property type="match status" value="1"/>
</dbReference>
<dbReference type="Gene3D" id="6.10.250.240">
    <property type="match status" value="1"/>
</dbReference>
<dbReference type="Gene3D" id="1.10.8.420">
    <property type="entry name" value="RecR Domain 1"/>
    <property type="match status" value="1"/>
</dbReference>
<dbReference type="HAMAP" id="MF_00017">
    <property type="entry name" value="RecR"/>
    <property type="match status" value="1"/>
</dbReference>
<dbReference type="InterPro" id="IPR000093">
    <property type="entry name" value="DNA_Rcmb_RecR"/>
</dbReference>
<dbReference type="InterPro" id="IPR023627">
    <property type="entry name" value="Rcmb_RecR"/>
</dbReference>
<dbReference type="InterPro" id="IPR015967">
    <property type="entry name" value="Rcmb_RecR_Znf"/>
</dbReference>
<dbReference type="InterPro" id="IPR006171">
    <property type="entry name" value="TOPRIM_dom"/>
</dbReference>
<dbReference type="InterPro" id="IPR034137">
    <property type="entry name" value="TOPRIM_RecR"/>
</dbReference>
<dbReference type="NCBIfam" id="TIGR00615">
    <property type="entry name" value="recR"/>
    <property type="match status" value="1"/>
</dbReference>
<dbReference type="PANTHER" id="PTHR30446">
    <property type="entry name" value="RECOMBINATION PROTEIN RECR"/>
    <property type="match status" value="1"/>
</dbReference>
<dbReference type="PANTHER" id="PTHR30446:SF0">
    <property type="entry name" value="RECOMBINATION PROTEIN RECR"/>
    <property type="match status" value="1"/>
</dbReference>
<dbReference type="Pfam" id="PF21175">
    <property type="entry name" value="RecR_C"/>
    <property type="match status" value="1"/>
</dbReference>
<dbReference type="Pfam" id="PF21176">
    <property type="entry name" value="RecR_HhH"/>
    <property type="match status" value="1"/>
</dbReference>
<dbReference type="Pfam" id="PF02132">
    <property type="entry name" value="RecR_ZnF"/>
    <property type="match status" value="1"/>
</dbReference>
<dbReference type="Pfam" id="PF13662">
    <property type="entry name" value="Toprim_4"/>
    <property type="match status" value="1"/>
</dbReference>
<dbReference type="SMART" id="SM00493">
    <property type="entry name" value="TOPRIM"/>
    <property type="match status" value="1"/>
</dbReference>
<dbReference type="SUPFAM" id="SSF111304">
    <property type="entry name" value="Recombination protein RecR"/>
    <property type="match status" value="1"/>
</dbReference>
<dbReference type="PROSITE" id="PS01300">
    <property type="entry name" value="RECR"/>
    <property type="match status" value="1"/>
</dbReference>
<dbReference type="PROSITE" id="PS50880">
    <property type="entry name" value="TOPRIM"/>
    <property type="match status" value="1"/>
</dbReference>
<reference key="1">
    <citation type="journal article" date="2011" name="Stand. Genomic Sci.">
        <title>Complete genome sequence of Parvibaculum lavamentivorans type strain (DS-1(T)).</title>
        <authorList>
            <person name="Schleheck D."/>
            <person name="Weiss M."/>
            <person name="Pitluck S."/>
            <person name="Bruce D."/>
            <person name="Land M.L."/>
            <person name="Han S."/>
            <person name="Saunders E."/>
            <person name="Tapia R."/>
            <person name="Detter C."/>
            <person name="Brettin T."/>
            <person name="Han J."/>
            <person name="Woyke T."/>
            <person name="Goodwin L."/>
            <person name="Pennacchio L."/>
            <person name="Nolan M."/>
            <person name="Cook A.M."/>
            <person name="Kjelleberg S."/>
            <person name="Thomas T."/>
        </authorList>
    </citation>
    <scope>NUCLEOTIDE SEQUENCE [LARGE SCALE GENOMIC DNA]</scope>
    <source>
        <strain>DS-1 / DSM 13023 / NCIMB 13966</strain>
    </source>
</reference>
<name>RECR_PARL1</name>
<gene>
    <name evidence="1" type="primary">recR</name>
    <name type="ordered locus">Plav_0258</name>
</gene>
<proteinExistence type="inferred from homology"/>
<keyword id="KW-0227">DNA damage</keyword>
<keyword id="KW-0233">DNA recombination</keyword>
<keyword id="KW-0234">DNA repair</keyword>
<keyword id="KW-0479">Metal-binding</keyword>
<keyword id="KW-1185">Reference proteome</keyword>
<keyword id="KW-0862">Zinc</keyword>
<keyword id="KW-0863">Zinc-finger</keyword>
<protein>
    <recommendedName>
        <fullName evidence="1">Recombination protein RecR</fullName>
    </recommendedName>
</protein>
<evidence type="ECO:0000255" key="1">
    <source>
        <dbReference type="HAMAP-Rule" id="MF_00017"/>
    </source>
</evidence>
<sequence>MAVTGPEIERLIALLSKLPGLGPRSARRAVLQLIKKKETLLGPLAAAMTDAMAKARICSACGNVDTQDPCAICADELRDPHILCIVEEVGDLWALERAGAHKGRYHVLGGVLSALDGVGPDDLNIGRLVERLTGGEVREVVLAMNATVDGQTTAHYITDRISGLGISVSRLAHGVPVGGELDYLDDGTLAAAMKSRRPF</sequence>
<accession>A7HPP8</accession>